<organism>
    <name type="scientific">Thermus thermophilus (strain ATCC BAA-163 / DSM 7039 / HB27)</name>
    <dbReference type="NCBI Taxonomy" id="262724"/>
    <lineage>
        <taxon>Bacteria</taxon>
        <taxon>Thermotogati</taxon>
        <taxon>Deinococcota</taxon>
        <taxon>Deinococci</taxon>
        <taxon>Thermales</taxon>
        <taxon>Thermaceae</taxon>
        <taxon>Thermus</taxon>
    </lineage>
</organism>
<comment type="function">
    <text evidence="1">Has an important function as a repair enzyme for proteins that have been inactivated by oxidation. Catalyzes the reversible oxidation-reduction of methionine sulfoxide in proteins to methionine.</text>
</comment>
<comment type="catalytic activity">
    <reaction evidence="1">
        <text>L-methionyl-[protein] + [thioredoxin]-disulfide + H2O = L-methionyl-(S)-S-oxide-[protein] + [thioredoxin]-dithiol</text>
        <dbReference type="Rhea" id="RHEA:14217"/>
        <dbReference type="Rhea" id="RHEA-COMP:10698"/>
        <dbReference type="Rhea" id="RHEA-COMP:10700"/>
        <dbReference type="Rhea" id="RHEA-COMP:12313"/>
        <dbReference type="Rhea" id="RHEA-COMP:12315"/>
        <dbReference type="ChEBI" id="CHEBI:15377"/>
        <dbReference type="ChEBI" id="CHEBI:16044"/>
        <dbReference type="ChEBI" id="CHEBI:29950"/>
        <dbReference type="ChEBI" id="CHEBI:44120"/>
        <dbReference type="ChEBI" id="CHEBI:50058"/>
        <dbReference type="EC" id="1.8.4.11"/>
    </reaction>
</comment>
<comment type="catalytic activity">
    <reaction evidence="1">
        <text>[thioredoxin]-disulfide + L-methionine + H2O = L-methionine (S)-S-oxide + [thioredoxin]-dithiol</text>
        <dbReference type="Rhea" id="RHEA:19993"/>
        <dbReference type="Rhea" id="RHEA-COMP:10698"/>
        <dbReference type="Rhea" id="RHEA-COMP:10700"/>
        <dbReference type="ChEBI" id="CHEBI:15377"/>
        <dbReference type="ChEBI" id="CHEBI:29950"/>
        <dbReference type="ChEBI" id="CHEBI:50058"/>
        <dbReference type="ChEBI" id="CHEBI:57844"/>
        <dbReference type="ChEBI" id="CHEBI:58772"/>
        <dbReference type="EC" id="1.8.4.11"/>
    </reaction>
</comment>
<comment type="similarity">
    <text evidence="1">Belongs to the MsrA Met sulfoxide reductase family.</text>
</comment>
<geneLocation type="plasmid">
    <name>pTT27</name>
</geneLocation>
<feature type="chain" id="PRO_0000138603" description="Peptide methionine sulfoxide reductase MsrA">
    <location>
        <begin position="1"/>
        <end position="176"/>
    </location>
</feature>
<feature type="active site" evidence="1">
    <location>
        <position position="12"/>
    </location>
</feature>
<proteinExistence type="inferred from homology"/>
<sequence>MPEEIATLAGGCFWCTEAAFKLLRGVLEVVPGYAGGHVPHPTYEEVCTGTTGHREAVQVRFDPGVLPYADLLRYFFAVHDPTSEDRQGPDVGPQYSPAIFYHSEEQKRVAEAVMRELAPLYPKPIATKLLPFTTFYPAEAYHRDYFARHPEAPYCRLVIAPKLEKARKAFKSLLRP</sequence>
<evidence type="ECO:0000255" key="1">
    <source>
        <dbReference type="HAMAP-Rule" id="MF_01401"/>
    </source>
</evidence>
<name>MSRA_THET2</name>
<protein>
    <recommendedName>
        <fullName evidence="1">Peptide methionine sulfoxide reductase MsrA</fullName>
        <shortName evidence="1">Protein-methionine-S-oxide reductase</shortName>
        <ecNumber evidence="1">1.8.4.11</ecNumber>
    </recommendedName>
    <alternativeName>
        <fullName evidence="1">Peptide-methionine (S)-S-oxide reductase</fullName>
        <shortName evidence="1">Peptide Met(O) reductase</shortName>
    </alternativeName>
</protein>
<gene>
    <name evidence="1" type="primary">msrA</name>
    <name type="ordered locus">TT_P0095</name>
</gene>
<dbReference type="EC" id="1.8.4.11" evidence="1"/>
<dbReference type="EMBL" id="AE017222">
    <property type="protein sequence ID" value="AAS82425.1"/>
    <property type="molecule type" value="Genomic_DNA"/>
</dbReference>
<dbReference type="RefSeq" id="WP_011174467.1">
    <property type="nucleotide sequence ID" value="NC_005838.1"/>
</dbReference>
<dbReference type="SMR" id="Q746G0"/>
<dbReference type="KEGG" id="tth:TT_P0095"/>
<dbReference type="eggNOG" id="COG0225">
    <property type="taxonomic scope" value="Bacteria"/>
</dbReference>
<dbReference type="HOGENOM" id="CLU_031040_10_0_0"/>
<dbReference type="OrthoDB" id="4174719at2"/>
<dbReference type="Proteomes" id="UP000000592">
    <property type="component" value="Plasmid pTT27"/>
</dbReference>
<dbReference type="GO" id="GO:0033744">
    <property type="term" value="F:L-methionine:thioredoxin-disulfide S-oxidoreductase activity"/>
    <property type="evidence" value="ECO:0007669"/>
    <property type="project" value="RHEA"/>
</dbReference>
<dbReference type="GO" id="GO:0008113">
    <property type="term" value="F:peptide-methionine (S)-S-oxide reductase activity"/>
    <property type="evidence" value="ECO:0007669"/>
    <property type="project" value="UniProtKB-UniRule"/>
</dbReference>
<dbReference type="GO" id="GO:0036211">
    <property type="term" value="P:protein modification process"/>
    <property type="evidence" value="ECO:0007669"/>
    <property type="project" value="UniProtKB-UniRule"/>
</dbReference>
<dbReference type="Gene3D" id="3.30.1060.10">
    <property type="entry name" value="Peptide methionine sulphoxide reductase MsrA"/>
    <property type="match status" value="1"/>
</dbReference>
<dbReference type="HAMAP" id="MF_01401">
    <property type="entry name" value="MsrA"/>
    <property type="match status" value="1"/>
</dbReference>
<dbReference type="InterPro" id="IPR002569">
    <property type="entry name" value="Met_Sox_Rdtase_MsrA_dom"/>
</dbReference>
<dbReference type="InterPro" id="IPR036509">
    <property type="entry name" value="Met_Sox_Rdtase_MsrA_sf"/>
</dbReference>
<dbReference type="NCBIfam" id="TIGR00401">
    <property type="entry name" value="msrA"/>
    <property type="match status" value="1"/>
</dbReference>
<dbReference type="PANTHER" id="PTHR43774">
    <property type="entry name" value="PEPTIDE METHIONINE SULFOXIDE REDUCTASE"/>
    <property type="match status" value="1"/>
</dbReference>
<dbReference type="PANTHER" id="PTHR43774:SF1">
    <property type="entry name" value="PEPTIDE METHIONINE SULFOXIDE REDUCTASE MSRA 2"/>
    <property type="match status" value="1"/>
</dbReference>
<dbReference type="Pfam" id="PF01625">
    <property type="entry name" value="PMSR"/>
    <property type="match status" value="1"/>
</dbReference>
<dbReference type="SUPFAM" id="SSF55068">
    <property type="entry name" value="Peptide methionine sulfoxide reductase"/>
    <property type="match status" value="1"/>
</dbReference>
<keyword id="KW-0560">Oxidoreductase</keyword>
<keyword id="KW-0614">Plasmid</keyword>
<accession>Q746G0</accession>
<reference key="1">
    <citation type="journal article" date="2004" name="Nat. Biotechnol.">
        <title>The genome sequence of the extreme thermophile Thermus thermophilus.</title>
        <authorList>
            <person name="Henne A."/>
            <person name="Brueggemann H."/>
            <person name="Raasch C."/>
            <person name="Wiezer A."/>
            <person name="Hartsch T."/>
            <person name="Liesegang H."/>
            <person name="Johann A."/>
            <person name="Lienard T."/>
            <person name="Gohl O."/>
            <person name="Martinez-Arias R."/>
            <person name="Jacobi C."/>
            <person name="Starkuviene V."/>
            <person name="Schlenczeck S."/>
            <person name="Dencker S."/>
            <person name="Huber R."/>
            <person name="Klenk H.-P."/>
            <person name="Kramer W."/>
            <person name="Merkl R."/>
            <person name="Gottschalk G."/>
            <person name="Fritz H.-J."/>
        </authorList>
    </citation>
    <scope>NUCLEOTIDE SEQUENCE [LARGE SCALE GENOMIC DNA]</scope>
    <source>
        <strain>ATCC BAA-163 / DSM 7039 / HB27</strain>
    </source>
</reference>